<name>MRS2_SCHPO</name>
<protein>
    <recommendedName>
        <fullName>Mitochondrial inner membrane magnesium transporter mrs2</fullName>
    </recommendedName>
    <alternativeName>
        <fullName>RNA-splicing protein mrs2</fullName>
    </alternativeName>
</protein>
<reference key="1">
    <citation type="journal article" date="2002" name="Nature">
        <title>The genome sequence of Schizosaccharomyces pombe.</title>
        <authorList>
            <person name="Wood V."/>
            <person name="Gwilliam R."/>
            <person name="Rajandream M.A."/>
            <person name="Lyne M.H."/>
            <person name="Lyne R."/>
            <person name="Stewart A."/>
            <person name="Sgouros J.G."/>
            <person name="Peat N."/>
            <person name="Hayles J."/>
            <person name="Baker S.G."/>
            <person name="Basham D."/>
            <person name="Bowman S."/>
            <person name="Brooks K."/>
            <person name="Brown D."/>
            <person name="Brown S."/>
            <person name="Chillingworth T."/>
            <person name="Churcher C.M."/>
            <person name="Collins M."/>
            <person name="Connor R."/>
            <person name="Cronin A."/>
            <person name="Davis P."/>
            <person name="Feltwell T."/>
            <person name="Fraser A."/>
            <person name="Gentles S."/>
            <person name="Goble A."/>
            <person name="Hamlin N."/>
            <person name="Harris D.E."/>
            <person name="Hidalgo J."/>
            <person name="Hodgson G."/>
            <person name="Holroyd S."/>
            <person name="Hornsby T."/>
            <person name="Howarth S."/>
            <person name="Huckle E.J."/>
            <person name="Hunt S."/>
            <person name="Jagels K."/>
            <person name="James K.D."/>
            <person name="Jones L."/>
            <person name="Jones M."/>
            <person name="Leather S."/>
            <person name="McDonald S."/>
            <person name="McLean J."/>
            <person name="Mooney P."/>
            <person name="Moule S."/>
            <person name="Mungall K.L."/>
            <person name="Murphy L.D."/>
            <person name="Niblett D."/>
            <person name="Odell C."/>
            <person name="Oliver K."/>
            <person name="O'Neil S."/>
            <person name="Pearson D."/>
            <person name="Quail M.A."/>
            <person name="Rabbinowitsch E."/>
            <person name="Rutherford K.M."/>
            <person name="Rutter S."/>
            <person name="Saunders D."/>
            <person name="Seeger K."/>
            <person name="Sharp S."/>
            <person name="Skelton J."/>
            <person name="Simmonds M.N."/>
            <person name="Squares R."/>
            <person name="Squares S."/>
            <person name="Stevens K."/>
            <person name="Taylor K."/>
            <person name="Taylor R.G."/>
            <person name="Tivey A."/>
            <person name="Walsh S.V."/>
            <person name="Warren T."/>
            <person name="Whitehead S."/>
            <person name="Woodward J.R."/>
            <person name="Volckaert G."/>
            <person name="Aert R."/>
            <person name="Robben J."/>
            <person name="Grymonprez B."/>
            <person name="Weltjens I."/>
            <person name="Vanstreels E."/>
            <person name="Rieger M."/>
            <person name="Schaefer M."/>
            <person name="Mueller-Auer S."/>
            <person name="Gabel C."/>
            <person name="Fuchs M."/>
            <person name="Duesterhoeft A."/>
            <person name="Fritzc C."/>
            <person name="Holzer E."/>
            <person name="Moestl D."/>
            <person name="Hilbert H."/>
            <person name="Borzym K."/>
            <person name="Langer I."/>
            <person name="Beck A."/>
            <person name="Lehrach H."/>
            <person name="Reinhardt R."/>
            <person name="Pohl T.M."/>
            <person name="Eger P."/>
            <person name="Zimmermann W."/>
            <person name="Wedler H."/>
            <person name="Wambutt R."/>
            <person name="Purnelle B."/>
            <person name="Goffeau A."/>
            <person name="Cadieu E."/>
            <person name="Dreano S."/>
            <person name="Gloux S."/>
            <person name="Lelaure V."/>
            <person name="Mottier S."/>
            <person name="Galibert F."/>
            <person name="Aves S.J."/>
            <person name="Xiang Z."/>
            <person name="Hunt C."/>
            <person name="Moore K."/>
            <person name="Hurst S.M."/>
            <person name="Lucas M."/>
            <person name="Rochet M."/>
            <person name="Gaillardin C."/>
            <person name="Tallada V.A."/>
            <person name="Garzon A."/>
            <person name="Thode G."/>
            <person name="Daga R.R."/>
            <person name="Cruzado L."/>
            <person name="Jimenez J."/>
            <person name="Sanchez M."/>
            <person name="del Rey F."/>
            <person name="Benito J."/>
            <person name="Dominguez A."/>
            <person name="Revuelta J.L."/>
            <person name="Moreno S."/>
            <person name="Armstrong J."/>
            <person name="Forsburg S.L."/>
            <person name="Cerutti L."/>
            <person name="Lowe T."/>
            <person name="McCombie W.R."/>
            <person name="Paulsen I."/>
            <person name="Potashkin J."/>
            <person name="Shpakovski G.V."/>
            <person name="Ussery D."/>
            <person name="Barrell B.G."/>
            <person name="Nurse P."/>
        </authorList>
    </citation>
    <scope>NUCLEOTIDE SEQUENCE [LARGE SCALE GENOMIC DNA]</scope>
    <source>
        <strain>972 / ATCC 24843</strain>
    </source>
</reference>
<feature type="transit peptide" description="Mitochondrion" evidence="2">
    <location>
        <begin position="1"/>
        <end position="49"/>
    </location>
</feature>
<feature type="chain" id="PRO_0000043248" description="Mitochondrial inner membrane magnesium transporter mrs2">
    <location>
        <begin position="50"/>
        <end position="422"/>
    </location>
</feature>
<feature type="transmembrane region" description="Helical" evidence="2">
    <location>
        <begin position="331"/>
        <end position="351"/>
    </location>
</feature>
<feature type="transmembrane region" description="Helical" evidence="2">
    <location>
        <begin position="370"/>
        <end position="390"/>
    </location>
</feature>
<feature type="short sequence motif" description="YGMN">
    <location>
        <begin position="355"/>
        <end position="358"/>
    </location>
</feature>
<evidence type="ECO:0000250" key="1">
    <source>
        <dbReference type="UniProtKB" id="Q01926"/>
    </source>
</evidence>
<evidence type="ECO:0000255" key="2"/>
<evidence type="ECO:0000305" key="3"/>
<proteinExistence type="inferred from homology"/>
<gene>
    <name type="primary">mrs2</name>
    <name type="ORF">SPBC25H2.08c</name>
</gene>
<accession>P87149</accession>
<comment type="function">
    <text evidence="1">High-conductance magnesium-selective channel that mediates the influx of magnesium into the mitochondrial matrix. Essential for the splicing of mRNA group II introns in mitochondria by affecting mitochondrial magnesium concentrations, which are critical for group II intron splicing. It also suppresses a variety of mitochondrial intron mutations and its absence may disturb the assembly of mitochondrial membrane complexes.</text>
</comment>
<comment type="subunit">
    <text evidence="1">Homopentamer. Forms homooligomers. Interacts with MFM1.</text>
</comment>
<comment type="subcellular location">
    <subcellularLocation>
        <location evidence="1">Mitochondrion inner membrane</location>
        <topology evidence="1">Multi-pass membrane protein</topology>
    </subcellularLocation>
</comment>
<comment type="similarity">
    <text evidence="3">Belongs to the CorA metal ion transporter (MIT) (TC 1.A.35) family.</text>
</comment>
<organism>
    <name type="scientific">Schizosaccharomyces pombe (strain 972 / ATCC 24843)</name>
    <name type="common">Fission yeast</name>
    <dbReference type="NCBI Taxonomy" id="284812"/>
    <lineage>
        <taxon>Eukaryota</taxon>
        <taxon>Fungi</taxon>
        <taxon>Dikarya</taxon>
        <taxon>Ascomycota</taxon>
        <taxon>Taphrinomycotina</taxon>
        <taxon>Schizosaccharomycetes</taxon>
        <taxon>Schizosaccharomycetales</taxon>
        <taxon>Schizosaccharomycetaceae</taxon>
        <taxon>Schizosaccharomyces</taxon>
    </lineage>
</organism>
<sequence length="422" mass="47888">MVLIVGFNLRTSIASFSPICRSLFLFPKYRSRIIRPVVLLEKPFDKHFYATDSNPLITGFPETSKNCPPSVAATKNRLLMNCTEFDDHGNVRVISGDFKKMDLCKQNGLLPRDLRKLNTSINSIVPVILVREGSILINLLHIRALIKANSVLLFDVYGSQHSHSQSQFIYELEGRLKQKSSDFGWLPYEMRALETILVSVVNTLDSELHVLHNLVSDLLADFELDINQERLRTLLIFSKRLSGFLKKATLIRDVLDELLEQDQDLAGMYLTERLKTGKPRDLDKHDEVELLLETYCKQVDEIVQQTDNLVGNIRSTEEICNIMLDANRNSLMLLGLKLSAMTLGLGFGAVVASLYGMNLQNGLENHPYAFYITTGSIFAFAAFLSSLGILKIRRLKRIQMALYHRCNLPISLDPRSLRPPYL</sequence>
<dbReference type="EMBL" id="CU329671">
    <property type="protein sequence ID" value="CAB08784.1"/>
    <property type="molecule type" value="Genomic_DNA"/>
</dbReference>
<dbReference type="PIR" id="T40003">
    <property type="entry name" value="T40003"/>
</dbReference>
<dbReference type="RefSeq" id="NP_596358.1">
    <property type="nucleotide sequence ID" value="NM_001022279.2"/>
</dbReference>
<dbReference type="SMR" id="P87149"/>
<dbReference type="BioGRID" id="276914">
    <property type="interactions" value="3"/>
</dbReference>
<dbReference type="FunCoup" id="P87149">
    <property type="interactions" value="268"/>
</dbReference>
<dbReference type="STRING" id="284812.P87149"/>
<dbReference type="PaxDb" id="4896-SPBC25H2.08c.1"/>
<dbReference type="EnsemblFungi" id="SPBC25H2.08c.1">
    <property type="protein sequence ID" value="SPBC25H2.08c.1:pep"/>
    <property type="gene ID" value="SPBC25H2.08c"/>
</dbReference>
<dbReference type="GeneID" id="2540385"/>
<dbReference type="KEGG" id="spo:2540385"/>
<dbReference type="PomBase" id="SPBC25H2.08c">
    <property type="gene designation" value="mrs2"/>
</dbReference>
<dbReference type="VEuPathDB" id="FungiDB:SPBC25H2.08c"/>
<dbReference type="eggNOG" id="KOG2662">
    <property type="taxonomic scope" value="Eukaryota"/>
</dbReference>
<dbReference type="HOGENOM" id="CLU_025144_1_2_1"/>
<dbReference type="InParanoid" id="P87149"/>
<dbReference type="OMA" id="TRNNCII"/>
<dbReference type="PhylomeDB" id="P87149"/>
<dbReference type="Reactome" id="R-SPO-5223345">
    <property type="pathway name" value="Miscellaneous transport and binding events"/>
</dbReference>
<dbReference type="PRO" id="PR:P87149"/>
<dbReference type="Proteomes" id="UP000002485">
    <property type="component" value="Chromosome II"/>
</dbReference>
<dbReference type="GO" id="GO:0005743">
    <property type="term" value="C:mitochondrial inner membrane"/>
    <property type="evidence" value="ECO:0000250"/>
    <property type="project" value="UniProtKB"/>
</dbReference>
<dbReference type="GO" id="GO:0005739">
    <property type="term" value="C:mitochondrion"/>
    <property type="evidence" value="ECO:0007005"/>
    <property type="project" value="PomBase"/>
</dbReference>
<dbReference type="GO" id="GO:0015095">
    <property type="term" value="F:magnesium ion transmembrane transporter activity"/>
    <property type="evidence" value="ECO:0000250"/>
    <property type="project" value="UniProtKB"/>
</dbReference>
<dbReference type="GO" id="GO:0045016">
    <property type="term" value="P:mitochondrial magnesium ion transmembrane transport"/>
    <property type="evidence" value="ECO:0000250"/>
    <property type="project" value="UniProtKB"/>
</dbReference>
<dbReference type="CDD" id="cd12823">
    <property type="entry name" value="Mrs2_Mfm1p-like"/>
    <property type="match status" value="1"/>
</dbReference>
<dbReference type="FunFam" id="1.20.58.340:FF:000005">
    <property type="entry name" value="Inner membrane magnesium transporter MRS2"/>
    <property type="match status" value="1"/>
</dbReference>
<dbReference type="FunFam" id="2.40.128.330:FF:000002">
    <property type="entry name" value="Inner membrane magnesium transporter mrs2"/>
    <property type="match status" value="1"/>
</dbReference>
<dbReference type="Gene3D" id="2.40.128.330">
    <property type="match status" value="1"/>
</dbReference>
<dbReference type="Gene3D" id="1.20.58.340">
    <property type="entry name" value="Magnesium transport protein CorA, transmembrane region"/>
    <property type="match status" value="1"/>
</dbReference>
<dbReference type="InterPro" id="IPR039204">
    <property type="entry name" value="MRS2-like"/>
</dbReference>
<dbReference type="PANTHER" id="PTHR13890:SF0">
    <property type="entry name" value="MAGNESIUM TRANSPORTER MRS2 HOMOLOG, MITOCHONDRIAL"/>
    <property type="match status" value="1"/>
</dbReference>
<dbReference type="PANTHER" id="PTHR13890">
    <property type="entry name" value="RNA SPLICING PROTEIN MRS2, MITOCHONDRIAL"/>
    <property type="match status" value="1"/>
</dbReference>
<dbReference type="Pfam" id="PF22099">
    <property type="entry name" value="MRS2-like"/>
    <property type="match status" value="1"/>
</dbReference>
<keyword id="KW-0406">Ion transport</keyword>
<keyword id="KW-0460">Magnesium</keyword>
<keyword id="KW-0472">Membrane</keyword>
<keyword id="KW-0496">Mitochondrion</keyword>
<keyword id="KW-0999">Mitochondrion inner membrane</keyword>
<keyword id="KW-1185">Reference proteome</keyword>
<keyword id="KW-0809">Transit peptide</keyword>
<keyword id="KW-0812">Transmembrane</keyword>
<keyword id="KW-1133">Transmembrane helix</keyword>
<keyword id="KW-0813">Transport</keyword>